<protein>
    <recommendedName>
        <fullName>Olfactory receptor 11H12</fullName>
    </recommendedName>
</protein>
<gene>
    <name type="primary">OR11H12</name>
</gene>
<accession>B2RN74</accession>
<name>O11HC_HUMAN</name>
<keyword id="KW-1003">Cell membrane</keyword>
<keyword id="KW-1015">Disulfide bond</keyword>
<keyword id="KW-0297">G-protein coupled receptor</keyword>
<keyword id="KW-0325">Glycoprotein</keyword>
<keyword id="KW-0472">Membrane</keyword>
<keyword id="KW-0552">Olfaction</keyword>
<keyword id="KW-0675">Receptor</keyword>
<keyword id="KW-1185">Reference proteome</keyword>
<keyword id="KW-0716">Sensory transduction</keyword>
<keyword id="KW-0807">Transducer</keyword>
<keyword id="KW-0812">Transmembrane</keyword>
<keyword id="KW-1133">Transmembrane helix</keyword>
<reference key="1">
    <citation type="journal article" date="2004" name="Genome Res.">
        <title>The status, quality, and expansion of the NIH full-length cDNA project: the Mammalian Gene Collection (MGC).</title>
        <authorList>
            <consortium name="The MGC Project Team"/>
        </authorList>
    </citation>
    <scope>NUCLEOTIDE SEQUENCE [LARGE SCALE MRNA]</scope>
</reference>
<sequence>MCPLTLQVTGLMNVSEPNSSFAFVNEFILQGFTCEWTIQIFLFSLFTTTYALTITGNGAIAFVLWCDWRLHTPMYMFLGNFSFLEIWYVSSTVPKMLVNFLSEKKNISFAGCFLQFYFFFSLGTSECLLLTVMAFDQYLAICRPLLYPNIMTGHLCAKLVILCWVCGFLWFLIPIVLISQMPFCGPNIIDHVVCDPGPRFALDCVSAPRIQLFCYTLSSLVIFGNFLFIIGSYTLVLKAVLGMPSSTGRHKAFSTCGSHLAVVSLCYSSLMVMYVSPGLGHSTGMQKIETLFYAMVTPLFNPLIYSLQNKEIKAALRKVLGSSNII</sequence>
<dbReference type="EMBL" id="BC136730">
    <property type="protein sequence ID" value="AAI36731.1"/>
    <property type="molecule type" value="mRNA"/>
</dbReference>
<dbReference type="EMBL" id="BC136731">
    <property type="protein sequence ID" value="AAI36732.1"/>
    <property type="molecule type" value="mRNA"/>
</dbReference>
<dbReference type="CCDS" id="CCDS32017.1"/>
<dbReference type="RefSeq" id="NP_001013372.1">
    <property type="nucleotide sequence ID" value="NM_001013354.1"/>
</dbReference>
<dbReference type="SMR" id="B2RN74"/>
<dbReference type="BioGRID" id="136341">
    <property type="interactions" value="3"/>
</dbReference>
<dbReference type="FunCoup" id="B2RN74">
    <property type="interactions" value="416"/>
</dbReference>
<dbReference type="STRING" id="9606.ENSP00000449002"/>
<dbReference type="GlyCosmos" id="B2RN74">
    <property type="glycosylation" value="3 sites, No reported glycans"/>
</dbReference>
<dbReference type="GlyGen" id="B2RN74">
    <property type="glycosylation" value="3 sites"/>
</dbReference>
<dbReference type="BioMuta" id="OR11H12"/>
<dbReference type="PaxDb" id="9606-ENSP00000449002"/>
<dbReference type="Antibodypedia" id="52804">
    <property type="antibodies" value="26 antibodies from 13 providers"/>
</dbReference>
<dbReference type="DNASU" id="440153"/>
<dbReference type="Ensembl" id="ENST00000550708.2">
    <property type="protein sequence ID" value="ENSP00000449002.1"/>
    <property type="gene ID" value="ENSG00000257115.2"/>
</dbReference>
<dbReference type="GeneID" id="440153"/>
<dbReference type="KEGG" id="hsa:440153"/>
<dbReference type="MANE-Select" id="ENST00000550708.2">
    <property type="protein sequence ID" value="ENSP00000449002.1"/>
    <property type="RefSeq nucleotide sequence ID" value="NM_001013354.1"/>
    <property type="RefSeq protein sequence ID" value="NP_001013372.1"/>
</dbReference>
<dbReference type="UCSC" id="uc010tkp.3">
    <property type="organism name" value="human"/>
</dbReference>
<dbReference type="AGR" id="HGNC:30738"/>
<dbReference type="CTD" id="440153"/>
<dbReference type="DisGeNET" id="440153"/>
<dbReference type="GeneCards" id="OR11H12"/>
<dbReference type="HGNC" id="HGNC:30738">
    <property type="gene designation" value="OR11H12"/>
</dbReference>
<dbReference type="HPA" id="ENSG00000257115">
    <property type="expression patterns" value="Not detected"/>
</dbReference>
<dbReference type="neXtProt" id="NX_B2RN74"/>
<dbReference type="PharmGKB" id="PA142671220"/>
<dbReference type="VEuPathDB" id="HostDB:ENSG00000257115"/>
<dbReference type="eggNOG" id="ENOG502QVH7">
    <property type="taxonomic scope" value="Eukaryota"/>
</dbReference>
<dbReference type="GeneTree" id="ENSGT00940000163479"/>
<dbReference type="HOGENOM" id="CLU_012526_1_0_1"/>
<dbReference type="InParanoid" id="B2RN74"/>
<dbReference type="OMA" id="VCALWCD"/>
<dbReference type="OrthoDB" id="6144223at2759"/>
<dbReference type="PAN-GO" id="B2RN74">
    <property type="GO annotations" value="0 GO annotations based on evolutionary models"/>
</dbReference>
<dbReference type="PhylomeDB" id="B2RN74"/>
<dbReference type="PathwayCommons" id="B2RN74"/>
<dbReference type="SignaLink" id="B2RN74"/>
<dbReference type="BioGRID-ORCS" id="440153">
    <property type="hits" value="16 hits in 619 CRISPR screens"/>
</dbReference>
<dbReference type="GenomeRNAi" id="440153"/>
<dbReference type="Pharos" id="B2RN74">
    <property type="development level" value="Tdark"/>
</dbReference>
<dbReference type="PRO" id="PR:B2RN74"/>
<dbReference type="Proteomes" id="UP000005640">
    <property type="component" value="Chromosome 14"/>
</dbReference>
<dbReference type="RNAct" id="B2RN74">
    <property type="molecule type" value="protein"/>
</dbReference>
<dbReference type="Bgee" id="ENSG00000257115">
    <property type="expression patterns" value="Expressed in male germ line stem cell (sensu Vertebrata) in testis and 4 other cell types or tissues"/>
</dbReference>
<dbReference type="GO" id="GO:0005886">
    <property type="term" value="C:plasma membrane"/>
    <property type="evidence" value="ECO:0007669"/>
    <property type="project" value="UniProtKB-SubCell"/>
</dbReference>
<dbReference type="GO" id="GO:0004930">
    <property type="term" value="F:G protein-coupled receptor activity"/>
    <property type="evidence" value="ECO:0007669"/>
    <property type="project" value="UniProtKB-KW"/>
</dbReference>
<dbReference type="GO" id="GO:0004984">
    <property type="term" value="F:olfactory receptor activity"/>
    <property type="evidence" value="ECO:0007669"/>
    <property type="project" value="InterPro"/>
</dbReference>
<dbReference type="CDD" id="cd15913">
    <property type="entry name" value="7tmA_OR11G-like"/>
    <property type="match status" value="1"/>
</dbReference>
<dbReference type="FunFam" id="1.10.1220.70:FF:000001">
    <property type="entry name" value="Olfactory receptor"/>
    <property type="match status" value="1"/>
</dbReference>
<dbReference type="FunFam" id="1.20.1070.10:FF:000001">
    <property type="entry name" value="Olfactory receptor"/>
    <property type="match status" value="1"/>
</dbReference>
<dbReference type="Gene3D" id="1.20.1070.10">
    <property type="entry name" value="Rhodopsin 7-helix transmembrane proteins"/>
    <property type="match status" value="1"/>
</dbReference>
<dbReference type="InterPro" id="IPR000276">
    <property type="entry name" value="GPCR_Rhodpsn"/>
</dbReference>
<dbReference type="InterPro" id="IPR017452">
    <property type="entry name" value="GPCR_Rhodpsn_7TM"/>
</dbReference>
<dbReference type="InterPro" id="IPR000725">
    <property type="entry name" value="Olfact_rcpt"/>
</dbReference>
<dbReference type="InterPro" id="IPR050939">
    <property type="entry name" value="Olfactory_GPCR1"/>
</dbReference>
<dbReference type="PANTHER" id="PTHR24242">
    <property type="entry name" value="G-PROTEIN COUPLED RECEPTOR"/>
    <property type="match status" value="1"/>
</dbReference>
<dbReference type="PANTHER" id="PTHR24242:SF201">
    <property type="entry name" value="OLFACTORY RECEPTOR 11H1-RELATED"/>
    <property type="match status" value="1"/>
</dbReference>
<dbReference type="Pfam" id="PF13853">
    <property type="entry name" value="7tm_4"/>
    <property type="match status" value="1"/>
</dbReference>
<dbReference type="PRINTS" id="PR00237">
    <property type="entry name" value="GPCRRHODOPSN"/>
</dbReference>
<dbReference type="PRINTS" id="PR00245">
    <property type="entry name" value="OLFACTORYR"/>
</dbReference>
<dbReference type="SUPFAM" id="SSF81321">
    <property type="entry name" value="Family A G protein-coupled receptor-like"/>
    <property type="match status" value="1"/>
</dbReference>
<dbReference type="PROSITE" id="PS50262">
    <property type="entry name" value="G_PROTEIN_RECEP_F1_2"/>
    <property type="match status" value="1"/>
</dbReference>
<feature type="chain" id="PRO_0000344798" description="Olfactory receptor 11H12">
    <location>
        <begin position="1"/>
        <end position="326"/>
    </location>
</feature>
<feature type="topological domain" description="Extracellular" evidence="1">
    <location>
        <begin position="1"/>
        <end position="44"/>
    </location>
</feature>
<feature type="transmembrane region" description="Helical; Name=1" evidence="1">
    <location>
        <begin position="45"/>
        <end position="65"/>
    </location>
</feature>
<feature type="topological domain" description="Cytoplasmic" evidence="1">
    <location>
        <begin position="66"/>
        <end position="72"/>
    </location>
</feature>
<feature type="transmembrane region" description="Helical; Name=2" evidence="1">
    <location>
        <begin position="73"/>
        <end position="93"/>
    </location>
</feature>
<feature type="topological domain" description="Extracellular" evidence="1">
    <location>
        <begin position="94"/>
        <end position="112"/>
    </location>
</feature>
<feature type="transmembrane region" description="Helical; Name=3" evidence="1">
    <location>
        <begin position="113"/>
        <end position="133"/>
    </location>
</feature>
<feature type="topological domain" description="Cytoplasmic" evidence="1">
    <location>
        <begin position="134"/>
        <end position="158"/>
    </location>
</feature>
<feature type="transmembrane region" description="Helical; Name=4" evidence="1">
    <location>
        <begin position="159"/>
        <end position="179"/>
    </location>
</feature>
<feature type="topological domain" description="Extracellular" evidence="1">
    <location>
        <begin position="180"/>
        <end position="216"/>
    </location>
</feature>
<feature type="transmembrane region" description="Helical; Name=5" evidence="1">
    <location>
        <begin position="217"/>
        <end position="237"/>
    </location>
</feature>
<feature type="topological domain" description="Cytoplasmic" evidence="1">
    <location>
        <begin position="238"/>
        <end position="259"/>
    </location>
</feature>
<feature type="transmembrane region" description="Helical; Name=6" evidence="1">
    <location>
        <begin position="260"/>
        <end position="280"/>
    </location>
</feature>
<feature type="topological domain" description="Extracellular" evidence="1">
    <location>
        <begin position="281"/>
        <end position="287"/>
    </location>
</feature>
<feature type="transmembrane region" description="Helical; Name=7" evidence="1">
    <location>
        <begin position="288"/>
        <end position="308"/>
    </location>
</feature>
<feature type="topological domain" description="Cytoplasmic" evidence="1">
    <location>
        <begin position="309"/>
        <end position="326"/>
    </location>
</feature>
<feature type="glycosylation site" description="N-linked (GlcNAc...) asparagine" evidence="1">
    <location>
        <position position="13"/>
    </location>
</feature>
<feature type="glycosylation site" description="N-linked (GlcNAc...) asparagine" evidence="1">
    <location>
        <position position="18"/>
    </location>
</feature>
<feature type="glycosylation site" description="N-linked (GlcNAc...) asparagine" evidence="1">
    <location>
        <position position="106"/>
    </location>
</feature>
<feature type="disulfide bond" evidence="2">
    <location>
        <begin position="112"/>
        <end position="194"/>
    </location>
</feature>
<organism>
    <name type="scientific">Homo sapiens</name>
    <name type="common">Human</name>
    <dbReference type="NCBI Taxonomy" id="9606"/>
    <lineage>
        <taxon>Eukaryota</taxon>
        <taxon>Metazoa</taxon>
        <taxon>Chordata</taxon>
        <taxon>Craniata</taxon>
        <taxon>Vertebrata</taxon>
        <taxon>Euteleostomi</taxon>
        <taxon>Mammalia</taxon>
        <taxon>Eutheria</taxon>
        <taxon>Euarchontoglires</taxon>
        <taxon>Primates</taxon>
        <taxon>Haplorrhini</taxon>
        <taxon>Catarrhini</taxon>
        <taxon>Hominidae</taxon>
        <taxon>Homo</taxon>
    </lineage>
</organism>
<evidence type="ECO:0000255" key="1"/>
<evidence type="ECO:0000255" key="2">
    <source>
        <dbReference type="PROSITE-ProRule" id="PRU00521"/>
    </source>
</evidence>
<evidence type="ECO:0000305" key="3"/>
<proteinExistence type="evidence at transcript level"/>
<comment type="function">
    <text evidence="3">Odorant receptor.</text>
</comment>
<comment type="subcellular location">
    <subcellularLocation>
        <location>Cell membrane</location>
        <topology>Multi-pass membrane protein</topology>
    </subcellularLocation>
</comment>
<comment type="similarity">
    <text evidence="2">Belongs to the G-protein coupled receptor 1 family.</text>
</comment>
<comment type="online information" name="Human Olfactory Receptor Data Exploratorium (HORDE)">
    <link uri="http://genome.weizmann.ac.il/horde/card/index/symbol:OR11H12"/>
</comment>